<gene>
    <name evidence="4" type="primary">NO</name>
</gene>
<accession>P0DO91</accession>
<evidence type="ECO:0000250" key="1">
    <source>
        <dbReference type="UniProtKB" id="Q96242"/>
    </source>
</evidence>
<evidence type="ECO:0000255" key="2"/>
<evidence type="ECO:0000269" key="3">
    <source>
    </source>
</evidence>
<evidence type="ECO:0000303" key="4">
    <source>
    </source>
</evidence>
<evidence type="ECO:0000305" key="5"/>
<keyword id="KW-0349">Heme</keyword>
<keyword id="KW-0408">Iron</keyword>
<keyword id="KW-0472">Membrane</keyword>
<keyword id="KW-0479">Metal-binding</keyword>
<keyword id="KW-0503">Monooxygenase</keyword>
<keyword id="KW-0560">Oxidoreductase</keyword>
<keyword id="KW-0812">Transmembrane</keyword>
<keyword id="KW-1133">Transmembrane helix</keyword>
<feature type="chain" id="PRO_0000461115" description="Norfluorocurarine oxidase">
    <location>
        <begin position="1"/>
        <end position="512"/>
    </location>
</feature>
<feature type="transmembrane region" description="Helical" evidence="2">
    <location>
        <begin position="3"/>
        <end position="23"/>
    </location>
</feature>
<feature type="binding site" description="axial binding residue" evidence="1">
    <location>
        <position position="453"/>
    </location>
    <ligand>
        <name>heme</name>
        <dbReference type="ChEBI" id="CHEBI:30413"/>
    </ligand>
    <ligandPart>
        <name>Fe</name>
        <dbReference type="ChEBI" id="CHEBI:18248"/>
    </ligandPart>
</feature>
<protein>
    <recommendedName>
        <fullName evidence="4">Norfluorocurarine oxidase</fullName>
        <shortName evidence="4">SpNO</shortName>
        <ecNumber evidence="3">1.14.14.188</ecNumber>
    </recommendedName>
    <alternativeName>
        <fullName evidence="4">CYP450 monooxygenase NO</fullName>
    </alternativeName>
    <alternativeName>
        <fullName evidence="4">Cytochrome P450 NO</fullName>
    </alternativeName>
</protein>
<reference key="1">
    <citation type="journal article" date="2022" name="Nature">
        <title>Biosynthesis of strychnine.</title>
        <authorList>
            <person name="Hong B."/>
            <person name="Grzech D."/>
            <person name="Caputi L."/>
            <person name="Sonawane P."/>
            <person name="Lopez C.E.R."/>
            <person name="Kamileen M.O."/>
            <person name="Hernandez Lozada N.J."/>
            <person name="Grabe V."/>
            <person name="O'Connor S.E."/>
        </authorList>
    </citation>
    <scope>NUCLEOTIDE SEQUENCE [MRNA]</scope>
    <scope>FUNCTION</scope>
    <scope>CATALYTIC ACTIVITY</scope>
    <scope>PATHWAY</scope>
</reference>
<proteinExistence type="evidence at protein level"/>
<organism>
    <name type="scientific">Strychnos sp</name>
    <dbReference type="NCBI Taxonomy" id="2946199"/>
    <lineage>
        <taxon>Eukaryota</taxon>
        <taxon>Viridiplantae</taxon>
        <taxon>Streptophyta</taxon>
        <taxon>Embryophyta</taxon>
        <taxon>Tracheophyta</taxon>
        <taxon>Spermatophyta</taxon>
        <taxon>Magnoliopsida</taxon>
        <taxon>eudicotyledons</taxon>
        <taxon>Gunneridae</taxon>
        <taxon>Pentapetalae</taxon>
        <taxon>asterids</taxon>
        <taxon>lamiids</taxon>
        <taxon>Gentianales</taxon>
        <taxon>Loganiaceae</taxon>
        <taxon>Strychnos</taxon>
    </lineage>
</organism>
<sequence>MELLLNPSLFSLLPLLLFIIFLFKRLYTSPTCQRKLPPSPPKLPVIGNLHQVGSLPHRSLRSLSQKYGPLMLLHFGSVPVLVASSAEAACEIMKSHDIVFSTRPKSNISDKLTYGSKDIAFSPYGEYWRRVRSICVNHLLSNQRVKSFRHVIEEETKKMIENINERCVSSSSPVNLSDFTLTLTNSIICTIAFGRKHCDVENMRKIKAMLMGFEEILSVFDAGDYIPWLAWVNRFTGLDAKLKTLAKQGDELVEGVIDAHMKRKKAEAQSYDAADQAKGTDFMDILLDIYQGTVPGFALDRDSVKAIILDMFTAGTDTIYTSIDWTIAELLRHPRVLKKLHTEVRQVAQGKSEITEEDLGKMEYLKVVIKETLRLHPPIPLLLPRESTQEISIMGYHILAGTQVIVNAWAIGRDPLYWENPEEFRPERFMGSDMDFRGFNFEYTPFGAGRRSCPALAFAIAVVELTIAKLVQRFDFALPDEAKPEDLDMTEASGTTVHKQLPIVVNVVATRN</sequence>
<dbReference type="EC" id="1.14.14.188" evidence="3"/>
<dbReference type="EMBL" id="OM304302">
    <property type="protein sequence ID" value="UQZ09633.1"/>
    <property type="molecule type" value="mRNA"/>
</dbReference>
<dbReference type="SMR" id="P0DO91"/>
<dbReference type="KEGG" id="ag:UQZ09633"/>
<dbReference type="GO" id="GO:0016020">
    <property type="term" value="C:membrane"/>
    <property type="evidence" value="ECO:0007669"/>
    <property type="project" value="UniProtKB-SubCell"/>
</dbReference>
<dbReference type="GO" id="GO:0020037">
    <property type="term" value="F:heme binding"/>
    <property type="evidence" value="ECO:0007669"/>
    <property type="project" value="InterPro"/>
</dbReference>
<dbReference type="GO" id="GO:0005506">
    <property type="term" value="F:iron ion binding"/>
    <property type="evidence" value="ECO:0007669"/>
    <property type="project" value="InterPro"/>
</dbReference>
<dbReference type="GO" id="GO:0004497">
    <property type="term" value="F:monooxygenase activity"/>
    <property type="evidence" value="ECO:0000314"/>
    <property type="project" value="UniProtKB"/>
</dbReference>
<dbReference type="GO" id="GO:0016705">
    <property type="term" value="F:oxidoreductase activity, acting on paired donors, with incorporation or reduction of molecular oxygen"/>
    <property type="evidence" value="ECO:0007669"/>
    <property type="project" value="InterPro"/>
</dbReference>
<dbReference type="GO" id="GO:0009821">
    <property type="term" value="P:alkaloid biosynthetic process"/>
    <property type="evidence" value="ECO:0000314"/>
    <property type="project" value="UniProtKB"/>
</dbReference>
<dbReference type="CDD" id="cd11072">
    <property type="entry name" value="CYP71-like"/>
    <property type="match status" value="1"/>
</dbReference>
<dbReference type="FunFam" id="1.10.630.10:FF:000011">
    <property type="entry name" value="Cytochrome P450 83B1"/>
    <property type="match status" value="1"/>
</dbReference>
<dbReference type="Gene3D" id="1.10.630.10">
    <property type="entry name" value="Cytochrome P450"/>
    <property type="match status" value="1"/>
</dbReference>
<dbReference type="InterPro" id="IPR001128">
    <property type="entry name" value="Cyt_P450"/>
</dbReference>
<dbReference type="InterPro" id="IPR017972">
    <property type="entry name" value="Cyt_P450_CS"/>
</dbReference>
<dbReference type="InterPro" id="IPR002401">
    <property type="entry name" value="Cyt_P450_E_grp-I"/>
</dbReference>
<dbReference type="InterPro" id="IPR036396">
    <property type="entry name" value="Cyt_P450_sf"/>
</dbReference>
<dbReference type="PANTHER" id="PTHR47955:SF15">
    <property type="entry name" value="CYTOCHROME P450 71A2-LIKE"/>
    <property type="match status" value="1"/>
</dbReference>
<dbReference type="PANTHER" id="PTHR47955">
    <property type="entry name" value="CYTOCHROME P450 FAMILY 71 PROTEIN"/>
    <property type="match status" value="1"/>
</dbReference>
<dbReference type="Pfam" id="PF00067">
    <property type="entry name" value="p450"/>
    <property type="match status" value="1"/>
</dbReference>
<dbReference type="PRINTS" id="PR00463">
    <property type="entry name" value="EP450I"/>
</dbReference>
<dbReference type="PRINTS" id="PR00385">
    <property type="entry name" value="P450"/>
</dbReference>
<dbReference type="SUPFAM" id="SSF48264">
    <property type="entry name" value="Cytochrome P450"/>
    <property type="match status" value="1"/>
</dbReference>
<dbReference type="PROSITE" id="PS00086">
    <property type="entry name" value="CYTOCHROME_P450"/>
    <property type="match status" value="1"/>
</dbReference>
<comment type="function">
    <text evidence="3">Monooxygenase involved in the biosynthesis of curare monoterpene indole alkaloids (MIAs), natural products such as diaboline, a pharmacologically active compound used to regulate blood pressure (PubMed:35794473). Curare alkaloids act as animal glycine receptor antagonists (PubMed:35794473). Catalyzes the conversion of norfluorocurarine to 18-OH norfluorocurarine (PubMed:35794473).</text>
</comment>
<comment type="catalytic activity">
    <reaction evidence="3">
        <text>norfluorocurarine + reduced [NADPH--hemoprotein reductase] + O2 = 18-hydroxynorfluorocurarine + oxidized [NADPH--hemoprotein reductase] + H2O + H(+)</text>
        <dbReference type="Rhea" id="RHEA:80907"/>
        <dbReference type="Rhea" id="RHEA-COMP:11964"/>
        <dbReference type="Rhea" id="RHEA-COMP:11965"/>
        <dbReference type="ChEBI" id="CHEBI:15377"/>
        <dbReference type="ChEBI" id="CHEBI:15378"/>
        <dbReference type="ChEBI" id="CHEBI:15379"/>
        <dbReference type="ChEBI" id="CHEBI:57618"/>
        <dbReference type="ChEBI" id="CHEBI:58210"/>
        <dbReference type="ChEBI" id="CHEBI:231650"/>
        <dbReference type="ChEBI" id="CHEBI:231652"/>
        <dbReference type="EC" id="1.14.14.188"/>
    </reaction>
    <physiologicalReaction direction="left-to-right" evidence="3">
        <dbReference type="Rhea" id="RHEA:80908"/>
    </physiologicalReaction>
</comment>
<comment type="cofactor">
    <cofactor evidence="1">
        <name>heme</name>
        <dbReference type="ChEBI" id="CHEBI:30413"/>
    </cofactor>
</comment>
<comment type="pathway">
    <text evidence="3">Alkaloid biosynthesis.</text>
</comment>
<comment type="subcellular location">
    <subcellularLocation>
        <location evidence="2">Membrane</location>
        <topology evidence="2">Single-pass membrane protein</topology>
    </subcellularLocation>
</comment>
<comment type="similarity">
    <text evidence="5">Belongs to the cytochrome P450 family.</text>
</comment>
<name>NO_STRYX</name>